<name>ISPG_PSESM</name>
<gene>
    <name evidence="1" type="primary">ispG</name>
    <name type="ordered locus">PSPTO_1434</name>
</gene>
<evidence type="ECO:0000255" key="1">
    <source>
        <dbReference type="HAMAP-Rule" id="MF_00159"/>
    </source>
</evidence>
<protein>
    <recommendedName>
        <fullName evidence="1">4-hydroxy-3-methylbut-2-en-1-yl diphosphate synthase (flavodoxin)</fullName>
        <ecNumber evidence="1">1.17.7.3</ecNumber>
    </recommendedName>
    <alternativeName>
        <fullName evidence="1">1-hydroxy-2-methyl-2-(E)-butenyl 4-diphosphate synthase</fullName>
    </alternativeName>
</protein>
<comment type="function">
    <text evidence="1">Converts 2C-methyl-D-erythritol 2,4-cyclodiphosphate (ME-2,4cPP) into 1-hydroxy-2-methyl-2-(E)-butenyl 4-diphosphate.</text>
</comment>
<comment type="catalytic activity">
    <reaction evidence="1">
        <text>(2E)-4-hydroxy-3-methylbut-2-enyl diphosphate + oxidized [flavodoxin] + H2O + 2 H(+) = 2-C-methyl-D-erythritol 2,4-cyclic diphosphate + reduced [flavodoxin]</text>
        <dbReference type="Rhea" id="RHEA:43604"/>
        <dbReference type="Rhea" id="RHEA-COMP:10622"/>
        <dbReference type="Rhea" id="RHEA-COMP:10623"/>
        <dbReference type="ChEBI" id="CHEBI:15377"/>
        <dbReference type="ChEBI" id="CHEBI:15378"/>
        <dbReference type="ChEBI" id="CHEBI:57618"/>
        <dbReference type="ChEBI" id="CHEBI:58210"/>
        <dbReference type="ChEBI" id="CHEBI:58483"/>
        <dbReference type="ChEBI" id="CHEBI:128753"/>
        <dbReference type="EC" id="1.17.7.3"/>
    </reaction>
</comment>
<comment type="cofactor">
    <cofactor evidence="1">
        <name>[4Fe-4S] cluster</name>
        <dbReference type="ChEBI" id="CHEBI:49883"/>
    </cofactor>
    <text evidence="1">Binds 1 [4Fe-4S] cluster.</text>
</comment>
<comment type="pathway">
    <text evidence="1">Isoprenoid biosynthesis; isopentenyl diphosphate biosynthesis via DXP pathway; isopentenyl diphosphate from 1-deoxy-D-xylulose 5-phosphate: step 5/6.</text>
</comment>
<comment type="similarity">
    <text evidence="1">Belongs to the IspG family.</text>
</comment>
<reference key="1">
    <citation type="journal article" date="2003" name="Proc. Natl. Acad. Sci. U.S.A.">
        <title>The complete genome sequence of the Arabidopsis and tomato pathogen Pseudomonas syringae pv. tomato DC3000.</title>
        <authorList>
            <person name="Buell C.R."/>
            <person name="Joardar V."/>
            <person name="Lindeberg M."/>
            <person name="Selengut J."/>
            <person name="Paulsen I.T."/>
            <person name="Gwinn M.L."/>
            <person name="Dodson R.J."/>
            <person name="DeBoy R.T."/>
            <person name="Durkin A.S."/>
            <person name="Kolonay J.F."/>
            <person name="Madupu R."/>
            <person name="Daugherty S.C."/>
            <person name="Brinkac L.M."/>
            <person name="Beanan M.J."/>
            <person name="Haft D.H."/>
            <person name="Nelson W.C."/>
            <person name="Davidsen T.M."/>
            <person name="Zafar N."/>
            <person name="Zhou L."/>
            <person name="Liu J."/>
            <person name="Yuan Q."/>
            <person name="Khouri H.M."/>
            <person name="Fedorova N.B."/>
            <person name="Tran B."/>
            <person name="Russell D."/>
            <person name="Berry K.J."/>
            <person name="Utterback T.R."/>
            <person name="Van Aken S.E."/>
            <person name="Feldblyum T.V."/>
            <person name="D'Ascenzo M."/>
            <person name="Deng W.-L."/>
            <person name="Ramos A.R."/>
            <person name="Alfano J.R."/>
            <person name="Cartinhour S."/>
            <person name="Chatterjee A.K."/>
            <person name="Delaney T.P."/>
            <person name="Lazarowitz S.G."/>
            <person name="Martin G.B."/>
            <person name="Schneider D.J."/>
            <person name="Tang X."/>
            <person name="Bender C.L."/>
            <person name="White O."/>
            <person name="Fraser C.M."/>
            <person name="Collmer A."/>
        </authorList>
    </citation>
    <scope>NUCLEOTIDE SEQUENCE [LARGE SCALE GENOMIC DNA]</scope>
    <source>
        <strain>ATCC BAA-871 / DC3000</strain>
    </source>
</reference>
<keyword id="KW-0004">4Fe-4S</keyword>
<keyword id="KW-0408">Iron</keyword>
<keyword id="KW-0411">Iron-sulfur</keyword>
<keyword id="KW-0414">Isoprene biosynthesis</keyword>
<keyword id="KW-0479">Metal-binding</keyword>
<keyword id="KW-0560">Oxidoreductase</keyword>
<keyword id="KW-1185">Reference proteome</keyword>
<accession>Q886Z0</accession>
<organism>
    <name type="scientific">Pseudomonas syringae pv. tomato (strain ATCC BAA-871 / DC3000)</name>
    <dbReference type="NCBI Taxonomy" id="223283"/>
    <lineage>
        <taxon>Bacteria</taxon>
        <taxon>Pseudomonadati</taxon>
        <taxon>Pseudomonadota</taxon>
        <taxon>Gammaproteobacteria</taxon>
        <taxon>Pseudomonadales</taxon>
        <taxon>Pseudomonadaceae</taxon>
        <taxon>Pseudomonas</taxon>
    </lineage>
</organism>
<proteinExistence type="inferred from homology"/>
<dbReference type="EC" id="1.17.7.3" evidence="1"/>
<dbReference type="EMBL" id="AE016853">
    <property type="protein sequence ID" value="AAO54955.1"/>
    <property type="molecule type" value="Genomic_DNA"/>
</dbReference>
<dbReference type="RefSeq" id="NP_791260.1">
    <property type="nucleotide sequence ID" value="NC_004578.1"/>
</dbReference>
<dbReference type="RefSeq" id="WP_003380613.1">
    <property type="nucleotide sequence ID" value="NC_004578.1"/>
</dbReference>
<dbReference type="SMR" id="Q886Z0"/>
<dbReference type="STRING" id="223283.PSPTO_1434"/>
<dbReference type="DNASU" id="1183071"/>
<dbReference type="GeneID" id="61790074"/>
<dbReference type="KEGG" id="pst:PSPTO_1434"/>
<dbReference type="PATRIC" id="fig|223283.9.peg.1454"/>
<dbReference type="eggNOG" id="COG0821">
    <property type="taxonomic scope" value="Bacteria"/>
</dbReference>
<dbReference type="HOGENOM" id="CLU_042258_0_0_6"/>
<dbReference type="OrthoDB" id="9803214at2"/>
<dbReference type="PhylomeDB" id="Q886Z0"/>
<dbReference type="UniPathway" id="UPA00056">
    <property type="reaction ID" value="UER00096"/>
</dbReference>
<dbReference type="Proteomes" id="UP000002515">
    <property type="component" value="Chromosome"/>
</dbReference>
<dbReference type="GO" id="GO:0051539">
    <property type="term" value="F:4 iron, 4 sulfur cluster binding"/>
    <property type="evidence" value="ECO:0007669"/>
    <property type="project" value="UniProtKB-UniRule"/>
</dbReference>
<dbReference type="GO" id="GO:0046429">
    <property type="term" value="F:4-hydroxy-3-methylbut-2-en-1-yl diphosphate synthase activity (ferredoxin)"/>
    <property type="evidence" value="ECO:0007669"/>
    <property type="project" value="UniProtKB-UniRule"/>
</dbReference>
<dbReference type="GO" id="GO:0141197">
    <property type="term" value="F:4-hydroxy-3-methylbut-2-enyl-diphosphate synthase activity (flavodoxin)"/>
    <property type="evidence" value="ECO:0007669"/>
    <property type="project" value="UniProtKB-EC"/>
</dbReference>
<dbReference type="GO" id="GO:0005506">
    <property type="term" value="F:iron ion binding"/>
    <property type="evidence" value="ECO:0007669"/>
    <property type="project" value="InterPro"/>
</dbReference>
<dbReference type="GO" id="GO:0019288">
    <property type="term" value="P:isopentenyl diphosphate biosynthetic process, methylerythritol 4-phosphate pathway"/>
    <property type="evidence" value="ECO:0007669"/>
    <property type="project" value="UniProtKB-UniRule"/>
</dbReference>
<dbReference type="GO" id="GO:0016114">
    <property type="term" value="P:terpenoid biosynthetic process"/>
    <property type="evidence" value="ECO:0007669"/>
    <property type="project" value="InterPro"/>
</dbReference>
<dbReference type="FunFam" id="3.20.20.20:FF:000001">
    <property type="entry name" value="4-hydroxy-3-methylbut-2-en-1-yl diphosphate synthase (flavodoxin)"/>
    <property type="match status" value="1"/>
</dbReference>
<dbReference type="Gene3D" id="3.20.20.20">
    <property type="entry name" value="Dihydropteroate synthase-like"/>
    <property type="match status" value="1"/>
</dbReference>
<dbReference type="Gene3D" id="3.30.413.10">
    <property type="entry name" value="Sulfite Reductase Hemoprotein, domain 1"/>
    <property type="match status" value="1"/>
</dbReference>
<dbReference type="HAMAP" id="MF_00159">
    <property type="entry name" value="IspG"/>
    <property type="match status" value="1"/>
</dbReference>
<dbReference type="InterPro" id="IPR011005">
    <property type="entry name" value="Dihydropteroate_synth-like_sf"/>
</dbReference>
<dbReference type="InterPro" id="IPR016425">
    <property type="entry name" value="IspG_bac"/>
</dbReference>
<dbReference type="InterPro" id="IPR004588">
    <property type="entry name" value="IspG_bac-typ"/>
</dbReference>
<dbReference type="InterPro" id="IPR045854">
    <property type="entry name" value="NO2/SO3_Rdtase_4Fe4S_sf"/>
</dbReference>
<dbReference type="NCBIfam" id="TIGR00612">
    <property type="entry name" value="ispG_gcpE"/>
    <property type="match status" value="1"/>
</dbReference>
<dbReference type="NCBIfam" id="NF001540">
    <property type="entry name" value="PRK00366.1"/>
    <property type="match status" value="1"/>
</dbReference>
<dbReference type="PANTHER" id="PTHR30454">
    <property type="entry name" value="4-HYDROXY-3-METHYLBUT-2-EN-1-YL DIPHOSPHATE SYNTHASE"/>
    <property type="match status" value="1"/>
</dbReference>
<dbReference type="PANTHER" id="PTHR30454:SF0">
    <property type="entry name" value="4-HYDROXY-3-METHYLBUT-2-EN-1-YL DIPHOSPHATE SYNTHASE (FERREDOXIN), CHLOROPLASTIC"/>
    <property type="match status" value="1"/>
</dbReference>
<dbReference type="Pfam" id="PF04551">
    <property type="entry name" value="GcpE"/>
    <property type="match status" value="1"/>
</dbReference>
<dbReference type="PIRSF" id="PIRSF004640">
    <property type="entry name" value="IspG"/>
    <property type="match status" value="1"/>
</dbReference>
<dbReference type="SUPFAM" id="SSF51412">
    <property type="entry name" value="Inosine monophosphate dehydrogenase (IMPDH)"/>
    <property type="match status" value="1"/>
</dbReference>
<dbReference type="SUPFAM" id="SSF56014">
    <property type="entry name" value="Nitrite and sulphite reductase 4Fe-4S domain-like"/>
    <property type="match status" value="1"/>
</dbReference>
<sequence>MHGESPIKRRESRKIWVGSVPVGGDAPIAVQSMTNSDTNDVAATVAQINRLEAAGVDIVRISVPDMDAAEAFGRIKQLVKVPLVADIHFDYRIALRVAELGVDCLRINPGNIGREDRVRAVVDAARDRGIPIRIGVNAGSLEKDLQKKYGEPTPEALVESALRHVEHLERLNFKDFKVSVKASDVFMAVAAYRLLAKQIVQPLHLGITEAGGLRSGTVKSAVGLGMLLAEGIGDTIRISLAADPVEEVKVGYDILKSLRLRSRGINFIACPSCSRQNFDVVKTMNELEGRLEDLLVPLDVAVIGCVVNGPGEAKEAHIGLTGGTPNLIYIDGKPAQKLTNDNLVDELERLIREKAAEKTAADASVIVRG</sequence>
<feature type="chain" id="PRO_0000190620" description="4-hydroxy-3-methylbut-2-en-1-yl diphosphate synthase (flavodoxin)">
    <location>
        <begin position="1"/>
        <end position="369"/>
    </location>
</feature>
<feature type="binding site" evidence="1">
    <location>
        <position position="270"/>
    </location>
    <ligand>
        <name>[4Fe-4S] cluster</name>
        <dbReference type="ChEBI" id="CHEBI:49883"/>
    </ligand>
</feature>
<feature type="binding site" evidence="1">
    <location>
        <position position="273"/>
    </location>
    <ligand>
        <name>[4Fe-4S] cluster</name>
        <dbReference type="ChEBI" id="CHEBI:49883"/>
    </ligand>
</feature>
<feature type="binding site" evidence="1">
    <location>
        <position position="305"/>
    </location>
    <ligand>
        <name>[4Fe-4S] cluster</name>
        <dbReference type="ChEBI" id="CHEBI:49883"/>
    </ligand>
</feature>
<feature type="binding site" evidence="1">
    <location>
        <position position="312"/>
    </location>
    <ligand>
        <name>[4Fe-4S] cluster</name>
        <dbReference type="ChEBI" id="CHEBI:49883"/>
    </ligand>
</feature>